<comment type="function">
    <text evidence="1">Associates with the EF-Tu.GDP complex and induces the exchange of GDP to GTP. It remains bound to the aminoacyl-tRNA.EF-Tu.GTP complex up to the GTP hydrolysis stage on the ribosome.</text>
</comment>
<comment type="subcellular location">
    <subcellularLocation>
        <location evidence="1">Cytoplasm</location>
    </subcellularLocation>
</comment>
<comment type="similarity">
    <text evidence="1">Belongs to the EF-Ts family.</text>
</comment>
<dbReference type="EMBL" id="CP001083">
    <property type="protein sequence ID" value="ACQ54774.1"/>
    <property type="molecule type" value="Genomic_DNA"/>
</dbReference>
<dbReference type="RefSeq" id="WP_003362577.1">
    <property type="nucleotide sequence ID" value="NC_012658.1"/>
</dbReference>
<dbReference type="SMR" id="C3L0D2"/>
<dbReference type="KEGG" id="cbi:CLJ_B2659"/>
<dbReference type="HOGENOM" id="CLU_047155_0_0_9"/>
<dbReference type="Proteomes" id="UP000002333">
    <property type="component" value="Chromosome"/>
</dbReference>
<dbReference type="GO" id="GO:0005737">
    <property type="term" value="C:cytoplasm"/>
    <property type="evidence" value="ECO:0007669"/>
    <property type="project" value="UniProtKB-SubCell"/>
</dbReference>
<dbReference type="GO" id="GO:0003746">
    <property type="term" value="F:translation elongation factor activity"/>
    <property type="evidence" value="ECO:0007669"/>
    <property type="project" value="UniProtKB-UniRule"/>
</dbReference>
<dbReference type="CDD" id="cd14275">
    <property type="entry name" value="UBA_EF-Ts"/>
    <property type="match status" value="1"/>
</dbReference>
<dbReference type="FunFam" id="1.10.286.20:FF:000001">
    <property type="entry name" value="Elongation factor Ts"/>
    <property type="match status" value="1"/>
</dbReference>
<dbReference type="FunFam" id="1.10.8.10:FF:000001">
    <property type="entry name" value="Elongation factor Ts"/>
    <property type="match status" value="1"/>
</dbReference>
<dbReference type="Gene3D" id="1.10.286.20">
    <property type="match status" value="1"/>
</dbReference>
<dbReference type="Gene3D" id="1.10.8.10">
    <property type="entry name" value="DNA helicase RuvA subunit, C-terminal domain"/>
    <property type="match status" value="1"/>
</dbReference>
<dbReference type="Gene3D" id="3.30.479.20">
    <property type="entry name" value="Elongation factor Ts, dimerisation domain"/>
    <property type="match status" value="2"/>
</dbReference>
<dbReference type="HAMAP" id="MF_00050">
    <property type="entry name" value="EF_Ts"/>
    <property type="match status" value="1"/>
</dbReference>
<dbReference type="InterPro" id="IPR036402">
    <property type="entry name" value="EF-Ts_dimer_sf"/>
</dbReference>
<dbReference type="InterPro" id="IPR001816">
    <property type="entry name" value="Transl_elong_EFTs/EF1B"/>
</dbReference>
<dbReference type="InterPro" id="IPR014039">
    <property type="entry name" value="Transl_elong_EFTs/EF1B_dimer"/>
</dbReference>
<dbReference type="InterPro" id="IPR018101">
    <property type="entry name" value="Transl_elong_Ts_CS"/>
</dbReference>
<dbReference type="InterPro" id="IPR009060">
    <property type="entry name" value="UBA-like_sf"/>
</dbReference>
<dbReference type="NCBIfam" id="TIGR00116">
    <property type="entry name" value="tsf"/>
    <property type="match status" value="1"/>
</dbReference>
<dbReference type="PANTHER" id="PTHR11741">
    <property type="entry name" value="ELONGATION FACTOR TS"/>
    <property type="match status" value="1"/>
</dbReference>
<dbReference type="PANTHER" id="PTHR11741:SF0">
    <property type="entry name" value="ELONGATION FACTOR TS, MITOCHONDRIAL"/>
    <property type="match status" value="1"/>
</dbReference>
<dbReference type="Pfam" id="PF00889">
    <property type="entry name" value="EF_TS"/>
    <property type="match status" value="1"/>
</dbReference>
<dbReference type="SUPFAM" id="SSF54713">
    <property type="entry name" value="Elongation factor Ts (EF-Ts), dimerisation domain"/>
    <property type="match status" value="2"/>
</dbReference>
<dbReference type="SUPFAM" id="SSF46934">
    <property type="entry name" value="UBA-like"/>
    <property type="match status" value="1"/>
</dbReference>
<dbReference type="PROSITE" id="PS01126">
    <property type="entry name" value="EF_TS_1"/>
    <property type="match status" value="1"/>
</dbReference>
<name>EFTS_CLOB6</name>
<gene>
    <name evidence="1" type="primary">tsf</name>
    <name type="ordered locus">CLJ_B2659</name>
</gene>
<sequence length="307" mass="34213">MISAKMVKDLREKTGAGMMDCKKALTECDGDLEKAVEVLREKGLAAAAKKSGRVAAEGIVSTYISEDMKNGSIIEFNCETDFVSVNELFVELANNLSKQAAFSNVSTAEELLEEKYIADESKLVKDVITELIAKLGENMNLRRIAKLSVDKGVITSYIHGGGRIGVIVKLACEKEDAKLAEIAKDVAMQVAATNPLFLNRDGVDTDTLEKEKEIYRVQALNEGKPEKVVEKMVMGRINKYYKENCLVEQLWVKNGDYTITKYLQEQSKEIGADITVEAFVRYEKGEGIEKKEEDFAEEVQRQMNQGK</sequence>
<organism>
    <name type="scientific">Clostridium botulinum (strain 657 / Type Ba4)</name>
    <dbReference type="NCBI Taxonomy" id="515621"/>
    <lineage>
        <taxon>Bacteria</taxon>
        <taxon>Bacillati</taxon>
        <taxon>Bacillota</taxon>
        <taxon>Clostridia</taxon>
        <taxon>Eubacteriales</taxon>
        <taxon>Clostridiaceae</taxon>
        <taxon>Clostridium</taxon>
    </lineage>
</organism>
<protein>
    <recommendedName>
        <fullName evidence="1">Elongation factor Ts</fullName>
        <shortName evidence="1">EF-Ts</shortName>
    </recommendedName>
</protein>
<reference key="1">
    <citation type="submission" date="2008-05" db="EMBL/GenBank/DDBJ databases">
        <title>Genome sequence of Clostridium botulinum Ba4 strain 657.</title>
        <authorList>
            <person name="Shrivastava S."/>
            <person name="Brown J.L."/>
            <person name="Bruce D."/>
            <person name="Detter C."/>
            <person name="Munk C."/>
            <person name="Smith L.A."/>
            <person name="Smith T.J."/>
            <person name="Sutton G."/>
            <person name="Brettin T.S."/>
        </authorList>
    </citation>
    <scope>NUCLEOTIDE SEQUENCE [LARGE SCALE GENOMIC DNA]</scope>
    <source>
        <strain>657 / Type Ba4</strain>
    </source>
</reference>
<proteinExistence type="inferred from homology"/>
<accession>C3L0D2</accession>
<keyword id="KW-0963">Cytoplasm</keyword>
<keyword id="KW-0251">Elongation factor</keyword>
<keyword id="KW-0648">Protein biosynthesis</keyword>
<evidence type="ECO:0000255" key="1">
    <source>
        <dbReference type="HAMAP-Rule" id="MF_00050"/>
    </source>
</evidence>
<feature type="chain" id="PRO_1000202233" description="Elongation factor Ts">
    <location>
        <begin position="1"/>
        <end position="307"/>
    </location>
</feature>
<feature type="region of interest" description="Involved in Mg(2+) ion dislocation from EF-Tu" evidence="1">
    <location>
        <begin position="80"/>
        <end position="83"/>
    </location>
</feature>